<feature type="chain" id="PRO_0000148372" description="Dihydroorotate dehydrogenase B (NAD(+)), electron transfer subunit homolog">
    <location>
        <begin position="1"/>
        <end position="282"/>
    </location>
</feature>
<feature type="domain" description="FAD-binding FR-type" evidence="2">
    <location>
        <begin position="2"/>
        <end position="100"/>
    </location>
</feature>
<feature type="binding site" evidence="1">
    <location>
        <position position="225"/>
    </location>
    <ligand>
        <name>[2Fe-2S] cluster</name>
        <dbReference type="ChEBI" id="CHEBI:190135"/>
    </ligand>
</feature>
<feature type="binding site" evidence="1">
    <location>
        <position position="228"/>
    </location>
    <ligand>
        <name>[2Fe-2S] cluster</name>
        <dbReference type="ChEBI" id="CHEBI:190135"/>
    </ligand>
</feature>
<feature type="binding site" evidence="1">
    <location>
        <position position="240"/>
    </location>
    <ligand>
        <name>[2Fe-2S] cluster</name>
        <dbReference type="ChEBI" id="CHEBI:190135"/>
    </ligand>
</feature>
<feature type="strand" evidence="4">
    <location>
        <begin position="6"/>
        <end position="14"/>
    </location>
</feature>
<feature type="strand" evidence="4">
    <location>
        <begin position="16"/>
        <end position="25"/>
    </location>
</feature>
<feature type="helix" evidence="4">
    <location>
        <begin position="27"/>
        <end position="32"/>
    </location>
</feature>
<feature type="strand" evidence="4">
    <location>
        <begin position="38"/>
        <end position="44"/>
    </location>
</feature>
<feature type="strand" evidence="4">
    <location>
        <begin position="50"/>
        <end position="58"/>
    </location>
</feature>
<feature type="turn" evidence="4">
    <location>
        <begin position="59"/>
        <end position="62"/>
    </location>
</feature>
<feature type="strand" evidence="4">
    <location>
        <begin position="63"/>
        <end position="69"/>
    </location>
</feature>
<feature type="helix" evidence="4">
    <location>
        <begin position="73"/>
        <end position="80"/>
    </location>
</feature>
<feature type="strand" evidence="4">
    <location>
        <begin position="88"/>
        <end position="95"/>
    </location>
</feature>
<feature type="strand" evidence="4">
    <location>
        <begin position="104"/>
        <end position="111"/>
    </location>
</feature>
<feature type="helix" evidence="4">
    <location>
        <begin position="112"/>
        <end position="115"/>
    </location>
</feature>
<feature type="turn" evidence="4">
    <location>
        <begin position="116"/>
        <end position="118"/>
    </location>
</feature>
<feature type="helix" evidence="4">
    <location>
        <begin position="119"/>
        <end position="126"/>
    </location>
</feature>
<feature type="turn" evidence="4">
    <location>
        <begin position="127"/>
        <end position="129"/>
    </location>
</feature>
<feature type="strand" evidence="4">
    <location>
        <begin position="131"/>
        <end position="137"/>
    </location>
</feature>
<feature type="strand" evidence="4">
    <location>
        <begin position="139"/>
        <end position="144"/>
    </location>
</feature>
<feature type="helix" evidence="4">
    <location>
        <begin position="149"/>
        <end position="154"/>
    </location>
</feature>
<feature type="strand" evidence="4">
    <location>
        <begin position="155"/>
        <end position="169"/>
    </location>
</feature>
<feature type="helix" evidence="4">
    <location>
        <begin position="171"/>
        <end position="174"/>
    </location>
</feature>
<feature type="turn" evidence="4">
    <location>
        <begin position="175"/>
        <end position="181"/>
    </location>
</feature>
<feature type="strand" evidence="4">
    <location>
        <begin position="187"/>
        <end position="192"/>
    </location>
</feature>
<feature type="helix" evidence="4">
    <location>
        <begin position="193"/>
        <end position="201"/>
    </location>
</feature>
<feature type="turn" evidence="4">
    <location>
        <begin position="202"/>
        <end position="205"/>
    </location>
</feature>
<feature type="strand" evidence="4">
    <location>
        <begin position="210"/>
        <end position="213"/>
    </location>
</feature>
<feature type="strand" evidence="4">
    <location>
        <begin position="219"/>
        <end position="225"/>
    </location>
</feature>
<feature type="strand" evidence="4">
    <location>
        <begin position="229"/>
        <end position="232"/>
    </location>
</feature>
<feature type="strand" evidence="4">
    <location>
        <begin position="235"/>
        <end position="238"/>
    </location>
</feature>
<feature type="turn" evidence="4">
    <location>
        <begin position="239"/>
        <end position="241"/>
    </location>
</feature>
<feature type="strand" evidence="4">
    <location>
        <begin position="244"/>
        <end position="247"/>
    </location>
</feature>
<feature type="turn" evidence="4">
    <location>
        <begin position="248"/>
        <end position="250"/>
    </location>
</feature>
<feature type="helix" evidence="4">
    <location>
        <begin position="253"/>
        <end position="260"/>
    </location>
</feature>
<feature type="helix" evidence="4">
    <location>
        <begin position="267"/>
        <end position="273"/>
    </location>
</feature>
<name>PYRKH_THEMA</name>
<sequence length="282" mass="31091">MGGTALNEIVKKVKIAEDVFDFWIHSPSVSKEARPGQFVVIRLHEKGERIPLTVADTKPEEGLFRMVVKVVGKTTHELSLKKEGDTILDVVGPLGNPSEIENYGNVLLVGGGVGIATLYPIAKALKEAGNNITTVLGARTKDYLIMVDEFKEISDVLLVTDDGSAGMKGVVTDAMDKLFRERKFDICWAVGPTIMMKFCTLKAREFGVPIWVSLNPIMVDGTGMCGACRVTVSGQIKFACVDGPEFRGEEVDWDELLKRLAQYREQEKISYERFLKTAGESE</sequence>
<dbReference type="EMBL" id="AE000512">
    <property type="protein sequence ID" value="AAD36706.1"/>
    <property type="molecule type" value="Genomic_DNA"/>
</dbReference>
<dbReference type="PIR" id="G72230">
    <property type="entry name" value="G72230"/>
</dbReference>
<dbReference type="RefSeq" id="NP_229439.1">
    <property type="nucleotide sequence ID" value="NC_000853.1"/>
</dbReference>
<dbReference type="PDB" id="4YLF">
    <property type="method" value="X-ray"/>
    <property type="resolution" value="2.30 A"/>
    <property type="chains" value="A/C=1-276"/>
</dbReference>
<dbReference type="PDB" id="4YRY">
    <property type="method" value="X-ray"/>
    <property type="resolution" value="2.40 A"/>
    <property type="chains" value="A/C=1-276"/>
</dbReference>
<dbReference type="PDBsum" id="4YLF"/>
<dbReference type="PDBsum" id="4YRY"/>
<dbReference type="SMR" id="Q9X1X4"/>
<dbReference type="FunCoup" id="Q9X1X4">
    <property type="interactions" value="246"/>
</dbReference>
<dbReference type="STRING" id="243274.TM_1639"/>
<dbReference type="PaxDb" id="243274-THEMA_06050"/>
<dbReference type="EnsemblBacteria" id="AAD36706">
    <property type="protein sequence ID" value="AAD36706"/>
    <property type="gene ID" value="TM_1639"/>
</dbReference>
<dbReference type="KEGG" id="tma:TM1639"/>
<dbReference type="PATRIC" id="fig|243274.5.peg.1658"/>
<dbReference type="eggNOG" id="COG0543">
    <property type="taxonomic scope" value="Bacteria"/>
</dbReference>
<dbReference type="InParanoid" id="Q9X1X4"/>
<dbReference type="OrthoDB" id="9778346at2"/>
<dbReference type="BRENDA" id="1.6.1.4">
    <property type="organism ID" value="6331"/>
</dbReference>
<dbReference type="EvolutionaryTrace" id="Q9X1X4"/>
<dbReference type="Proteomes" id="UP000008183">
    <property type="component" value="Chromosome"/>
</dbReference>
<dbReference type="GO" id="GO:0051537">
    <property type="term" value="F:2 iron, 2 sulfur cluster binding"/>
    <property type="evidence" value="ECO:0007669"/>
    <property type="project" value="UniProtKB-KW"/>
</dbReference>
<dbReference type="GO" id="GO:0050660">
    <property type="term" value="F:flavin adenine dinucleotide binding"/>
    <property type="evidence" value="ECO:0007669"/>
    <property type="project" value="InterPro"/>
</dbReference>
<dbReference type="GO" id="GO:0046872">
    <property type="term" value="F:metal ion binding"/>
    <property type="evidence" value="ECO:0007669"/>
    <property type="project" value="UniProtKB-KW"/>
</dbReference>
<dbReference type="GO" id="GO:0016491">
    <property type="term" value="F:oxidoreductase activity"/>
    <property type="evidence" value="ECO:0007669"/>
    <property type="project" value="InterPro"/>
</dbReference>
<dbReference type="GO" id="GO:0006221">
    <property type="term" value="P:pyrimidine nucleotide biosynthetic process"/>
    <property type="evidence" value="ECO:0007669"/>
    <property type="project" value="InterPro"/>
</dbReference>
<dbReference type="CDD" id="cd06219">
    <property type="entry name" value="DHOD_e_trans_like1"/>
    <property type="match status" value="1"/>
</dbReference>
<dbReference type="Gene3D" id="3.40.50.80">
    <property type="entry name" value="Nucleotide-binding domain of ferredoxin-NADP reductase (FNR) module"/>
    <property type="match status" value="1"/>
</dbReference>
<dbReference type="Gene3D" id="2.40.30.10">
    <property type="entry name" value="Translation factors"/>
    <property type="match status" value="1"/>
</dbReference>
<dbReference type="InterPro" id="IPR008333">
    <property type="entry name" value="Cbr1-like_FAD-bd_dom"/>
</dbReference>
<dbReference type="InterPro" id="IPR012165">
    <property type="entry name" value="Cyt_c3_hydrogenase_gsu"/>
</dbReference>
<dbReference type="InterPro" id="IPR019480">
    <property type="entry name" value="Dihydroorotate_DH_Fe-S-bd"/>
</dbReference>
<dbReference type="InterPro" id="IPR017927">
    <property type="entry name" value="FAD-bd_FR_type"/>
</dbReference>
<dbReference type="InterPro" id="IPR039261">
    <property type="entry name" value="FNR_nucleotide-bd"/>
</dbReference>
<dbReference type="InterPro" id="IPR001433">
    <property type="entry name" value="OxRdtase_FAD/NAD-bd"/>
</dbReference>
<dbReference type="InterPro" id="IPR050353">
    <property type="entry name" value="PyrK_electron_transfer"/>
</dbReference>
<dbReference type="InterPro" id="IPR017938">
    <property type="entry name" value="Riboflavin_synthase-like_b-brl"/>
</dbReference>
<dbReference type="NCBIfam" id="NF004862">
    <property type="entry name" value="PRK06222.1"/>
    <property type="match status" value="1"/>
</dbReference>
<dbReference type="PANTHER" id="PTHR43513">
    <property type="entry name" value="DIHYDROOROTATE DEHYDROGENASE B (NAD(+)), ELECTRON TRANSFER SUBUNIT"/>
    <property type="match status" value="1"/>
</dbReference>
<dbReference type="PANTHER" id="PTHR43513:SF3">
    <property type="entry name" value="DIHYDROOROTATE DEHYDROGENASE B (NAD(+)), ELECTRON TRANSFER SUBUNIT-RELATED"/>
    <property type="match status" value="1"/>
</dbReference>
<dbReference type="Pfam" id="PF10418">
    <property type="entry name" value="DHODB_Fe-S_bind"/>
    <property type="match status" value="1"/>
</dbReference>
<dbReference type="Pfam" id="PF00970">
    <property type="entry name" value="FAD_binding_6"/>
    <property type="match status" value="1"/>
</dbReference>
<dbReference type="Pfam" id="PF00175">
    <property type="entry name" value="NAD_binding_1"/>
    <property type="match status" value="1"/>
</dbReference>
<dbReference type="PIRSF" id="PIRSF006816">
    <property type="entry name" value="Cyc3_hyd_g"/>
    <property type="match status" value="1"/>
</dbReference>
<dbReference type="SUPFAM" id="SSF52343">
    <property type="entry name" value="Ferredoxin reductase-like, C-terminal NADP-linked domain"/>
    <property type="match status" value="1"/>
</dbReference>
<dbReference type="SUPFAM" id="SSF63380">
    <property type="entry name" value="Riboflavin synthase domain-like"/>
    <property type="match status" value="1"/>
</dbReference>
<dbReference type="PROSITE" id="PS51384">
    <property type="entry name" value="FAD_FR"/>
    <property type="match status" value="1"/>
</dbReference>
<proteinExistence type="evidence at protein level"/>
<evidence type="ECO:0000250" key="1"/>
<evidence type="ECO:0000255" key="2">
    <source>
        <dbReference type="PROSITE-ProRule" id="PRU00716"/>
    </source>
</evidence>
<evidence type="ECO:0000305" key="3"/>
<evidence type="ECO:0007829" key="4">
    <source>
        <dbReference type="PDB" id="4YLF"/>
    </source>
</evidence>
<comment type="cofactor">
    <cofactor evidence="1">
        <name>[2Fe-2S] cluster</name>
        <dbReference type="ChEBI" id="CHEBI:190135"/>
    </cofactor>
    <text evidence="1">Binds 1 [2Fe-2S] cluster per subunit.</text>
</comment>
<comment type="cofactor">
    <cofactor evidence="1">
        <name>FAD</name>
        <dbReference type="ChEBI" id="CHEBI:57692"/>
    </cofactor>
    <text evidence="1">Binds 1 FAD per subunit.</text>
</comment>
<comment type="similarity">
    <text evidence="3">Belongs to the PyrK family.</text>
</comment>
<comment type="caution">
    <text evidence="3">Lacks the first cysteine that binds the 2Fe-2S complex.</text>
</comment>
<keyword id="KW-0001">2Fe-2S</keyword>
<keyword id="KW-0002">3D-structure</keyword>
<keyword id="KW-0249">Electron transport</keyword>
<keyword id="KW-0274">FAD</keyword>
<keyword id="KW-0285">Flavoprotein</keyword>
<keyword id="KW-0408">Iron</keyword>
<keyword id="KW-0411">Iron-sulfur</keyword>
<keyword id="KW-0479">Metal-binding</keyword>
<keyword id="KW-1185">Reference proteome</keyword>
<keyword id="KW-0813">Transport</keyword>
<organism>
    <name type="scientific">Thermotoga maritima (strain ATCC 43589 / DSM 3109 / JCM 10099 / NBRC 100826 / MSB8)</name>
    <dbReference type="NCBI Taxonomy" id="243274"/>
    <lineage>
        <taxon>Bacteria</taxon>
        <taxon>Thermotogati</taxon>
        <taxon>Thermotogota</taxon>
        <taxon>Thermotogae</taxon>
        <taxon>Thermotogales</taxon>
        <taxon>Thermotogaceae</taxon>
        <taxon>Thermotoga</taxon>
    </lineage>
</organism>
<accession>Q9X1X4</accession>
<protein>
    <recommendedName>
        <fullName>Dihydroorotate dehydrogenase B (NAD(+)), electron transfer subunit homolog</fullName>
    </recommendedName>
    <alternativeName>
        <fullName>Dihydroorotate oxidase B, electron transfer subunit homolog</fullName>
    </alternativeName>
</protein>
<reference key="1">
    <citation type="journal article" date="1999" name="Nature">
        <title>Evidence for lateral gene transfer between Archaea and Bacteria from genome sequence of Thermotoga maritima.</title>
        <authorList>
            <person name="Nelson K.E."/>
            <person name="Clayton R.A."/>
            <person name="Gill S.R."/>
            <person name="Gwinn M.L."/>
            <person name="Dodson R.J."/>
            <person name="Haft D.H."/>
            <person name="Hickey E.K."/>
            <person name="Peterson J.D."/>
            <person name="Nelson W.C."/>
            <person name="Ketchum K.A."/>
            <person name="McDonald L.A."/>
            <person name="Utterback T.R."/>
            <person name="Malek J.A."/>
            <person name="Linher K.D."/>
            <person name="Garrett M.M."/>
            <person name="Stewart A.M."/>
            <person name="Cotton M.D."/>
            <person name="Pratt M.S."/>
            <person name="Phillips C.A."/>
            <person name="Richardson D.L."/>
            <person name="Heidelberg J.F."/>
            <person name="Sutton G.G."/>
            <person name="Fleischmann R.D."/>
            <person name="Eisen J.A."/>
            <person name="White O."/>
            <person name="Salzberg S.L."/>
            <person name="Smith H.O."/>
            <person name="Venter J.C."/>
            <person name="Fraser C.M."/>
        </authorList>
    </citation>
    <scope>NUCLEOTIDE SEQUENCE [LARGE SCALE GENOMIC DNA]</scope>
    <source>
        <strain>ATCC 43589 / DSM 3109 / JCM 10099 / NBRC 100826 / MSB8</strain>
    </source>
</reference>
<gene>
    <name type="ordered locus">TM_1639</name>
</gene>